<evidence type="ECO:0000250" key="1"/>
<evidence type="ECO:0000250" key="2">
    <source>
        <dbReference type="UniProtKB" id="O32449"/>
    </source>
</evidence>
<evidence type="ECO:0000250" key="3">
    <source>
        <dbReference type="UniProtKB" id="P52278"/>
    </source>
</evidence>
<evidence type="ECO:0000250" key="4">
    <source>
        <dbReference type="UniProtKB" id="P96084"/>
    </source>
</evidence>
<evidence type="ECO:0000255" key="5"/>
<evidence type="ECO:0000312" key="6">
    <source>
        <dbReference type="EMBL" id="ABX26375.1"/>
    </source>
</evidence>
<accession>A8YWL3</accession>
<sequence>MEIIEGKMPFMGYETYYRIVGERSEKPPLVLLHGGPGSSHNYFEVLDELAQKDGRRIIMYDQLGCGESSIPDDHPELYTKETWVKELEALREHLALRKMHLLGQSWGGMLAIIYMCDYHPEGIQSLILSSTLSSASLWSKELHRMIKYLPIEEQAAIHRAELTGNFNDPDYLKANEHFMNQHAIDMTKTWPECVMRKKRGGTVAYETAWGPNEYTPEGNLHDYEYTDKLSKIKVPTLITSGTDDLCTPYVAKTMQDQIASSKWRLFEGCGHMSFVEKTDEYVALLQEWLDQHDE</sequence>
<protein>
    <recommendedName>
        <fullName evidence="6">Proline iminopeptidase</fullName>
        <shortName evidence="3">PIP</shortName>
        <ecNumber>3.4.11.5</ecNumber>
    </recommendedName>
    <alternativeName>
        <fullName evidence="3">Prolyl aminopeptidase</fullName>
        <shortName evidence="3">PAP</shortName>
    </alternativeName>
</protein>
<gene>
    <name evidence="3" type="primary">pip</name>
    <name type="ordered locus">lhv_0102</name>
</gene>
<feature type="chain" id="PRO_0000406325" description="Proline iminopeptidase">
    <location>
        <begin position="1"/>
        <end position="294"/>
    </location>
</feature>
<feature type="domain" description="AB hydrolase-1" evidence="5">
    <location>
        <begin position="27"/>
        <end position="277"/>
    </location>
</feature>
<feature type="active site" description="Nucleophile" evidence="4">
    <location>
        <position position="105"/>
    </location>
</feature>
<feature type="active site" evidence="2">
    <location>
        <position position="244"/>
    </location>
</feature>
<feature type="active site" description="Proton donor" evidence="4">
    <location>
        <position position="271"/>
    </location>
</feature>
<name>PIP_LACH4</name>
<organism>
    <name type="scientific">Lactobacillus helveticus (strain DPC 4571)</name>
    <dbReference type="NCBI Taxonomy" id="405566"/>
    <lineage>
        <taxon>Bacteria</taxon>
        <taxon>Bacillati</taxon>
        <taxon>Bacillota</taxon>
        <taxon>Bacilli</taxon>
        <taxon>Lactobacillales</taxon>
        <taxon>Lactobacillaceae</taxon>
        <taxon>Lactobacillus</taxon>
    </lineage>
</organism>
<dbReference type="EC" id="3.4.11.5"/>
<dbReference type="EMBL" id="CP000517">
    <property type="protein sequence ID" value="ABX26375.1"/>
    <property type="molecule type" value="Genomic_DNA"/>
</dbReference>
<dbReference type="RefSeq" id="WP_012211252.1">
    <property type="nucleotide sequence ID" value="NC_010080.1"/>
</dbReference>
<dbReference type="SMR" id="A8YWL3"/>
<dbReference type="ESTHER" id="lache-pip">
    <property type="family name" value="Proline_iminopeptidase"/>
</dbReference>
<dbReference type="MEROPS" id="S33.021"/>
<dbReference type="KEGG" id="lhe:lhv_0102"/>
<dbReference type="eggNOG" id="COG2267">
    <property type="taxonomic scope" value="Bacteria"/>
</dbReference>
<dbReference type="HOGENOM" id="CLU_020336_15_1_9"/>
<dbReference type="Proteomes" id="UP000000790">
    <property type="component" value="Chromosome"/>
</dbReference>
<dbReference type="GO" id="GO:0030313">
    <property type="term" value="C:cell envelope"/>
    <property type="evidence" value="ECO:0007669"/>
    <property type="project" value="UniProtKB-SubCell"/>
</dbReference>
<dbReference type="GO" id="GO:0016020">
    <property type="term" value="C:membrane"/>
    <property type="evidence" value="ECO:0007669"/>
    <property type="project" value="TreeGrafter"/>
</dbReference>
<dbReference type="GO" id="GO:0004177">
    <property type="term" value="F:aminopeptidase activity"/>
    <property type="evidence" value="ECO:0007669"/>
    <property type="project" value="UniProtKB-KW"/>
</dbReference>
<dbReference type="GO" id="GO:0006508">
    <property type="term" value="P:proteolysis"/>
    <property type="evidence" value="ECO:0007669"/>
    <property type="project" value="UniProtKB-KW"/>
</dbReference>
<dbReference type="Gene3D" id="3.40.50.1820">
    <property type="entry name" value="alpha/beta hydrolase"/>
    <property type="match status" value="1"/>
</dbReference>
<dbReference type="InterPro" id="IPR000073">
    <property type="entry name" value="AB_hydrolase_1"/>
</dbReference>
<dbReference type="InterPro" id="IPR029058">
    <property type="entry name" value="AB_hydrolase_fold"/>
</dbReference>
<dbReference type="InterPro" id="IPR050266">
    <property type="entry name" value="AB_hydrolase_sf"/>
</dbReference>
<dbReference type="InterPro" id="IPR002410">
    <property type="entry name" value="Peptidase_S33"/>
</dbReference>
<dbReference type="InterPro" id="IPR005945">
    <property type="entry name" value="Pro_imino_pep"/>
</dbReference>
<dbReference type="NCBIfam" id="TIGR01250">
    <property type="entry name" value="pro_imino_pep_2"/>
    <property type="match status" value="1"/>
</dbReference>
<dbReference type="NCBIfam" id="NF045945">
    <property type="entry name" value="ProImpepLactob"/>
    <property type="match status" value="1"/>
</dbReference>
<dbReference type="PANTHER" id="PTHR43798:SF33">
    <property type="entry name" value="HYDROLASE, PUTATIVE (AFU_ORTHOLOGUE AFUA_2G14860)-RELATED"/>
    <property type="match status" value="1"/>
</dbReference>
<dbReference type="PANTHER" id="PTHR43798">
    <property type="entry name" value="MONOACYLGLYCEROL LIPASE"/>
    <property type="match status" value="1"/>
</dbReference>
<dbReference type="Pfam" id="PF00561">
    <property type="entry name" value="Abhydrolase_1"/>
    <property type="match status" value="1"/>
</dbReference>
<dbReference type="PIRSF" id="PIRSF005539">
    <property type="entry name" value="Pept_S33_TRI_F1"/>
    <property type="match status" value="1"/>
</dbReference>
<dbReference type="PRINTS" id="PR00793">
    <property type="entry name" value="PROAMNOPTASE"/>
</dbReference>
<dbReference type="SUPFAM" id="SSF53474">
    <property type="entry name" value="alpha/beta-Hydrolases"/>
    <property type="match status" value="1"/>
</dbReference>
<proteinExistence type="inferred from homology"/>
<reference evidence="6" key="1">
    <citation type="journal article" date="2008" name="J. Bacteriol.">
        <title>Genome sequence of Lactobacillus helveticus: an organism distinguished by selective gene loss and IS element expansion.</title>
        <authorList>
            <person name="Callanan M."/>
            <person name="Kaleta P."/>
            <person name="O'Callaghan J."/>
            <person name="O'Sullivan O."/>
            <person name="Jordan K."/>
            <person name="McAuliffe O."/>
            <person name="Sangrador-Vegas A."/>
            <person name="Slattery L."/>
            <person name="Fitzgerald G.F."/>
            <person name="Beresford T."/>
            <person name="Ross R.P."/>
        </authorList>
    </citation>
    <scope>NUCLEOTIDE SEQUENCE [LARGE SCALE GENOMIC DNA]</scope>
    <source>
        <strain>DPC 4571</strain>
    </source>
</reference>
<keyword id="KW-0031">Aminopeptidase</keyword>
<keyword id="KW-0378">Hydrolase</keyword>
<keyword id="KW-0645">Protease</keyword>
<comment type="function">
    <text evidence="1">Releases the N-terminal proline from various substrates.</text>
</comment>
<comment type="catalytic activity">
    <reaction evidence="3">
        <text>Release of N-terminal proline from a peptide.</text>
        <dbReference type="EC" id="3.4.11.5"/>
    </reaction>
</comment>
<comment type="subcellular location">
    <subcellularLocation>
        <location evidence="1">Cell envelope</location>
    </subcellularLocation>
</comment>
<comment type="similarity">
    <text evidence="5">Belongs to the peptidase S33 family.</text>
</comment>